<gene>
    <name evidence="1" type="primary">leuC</name>
    <name type="ordered locus">DIP1127</name>
</gene>
<protein>
    <recommendedName>
        <fullName evidence="1">3-isopropylmalate dehydratase large subunit</fullName>
        <ecNumber evidence="1">4.2.1.33</ecNumber>
    </recommendedName>
    <alternativeName>
        <fullName evidence="1">Alpha-IPM isomerase</fullName>
        <shortName evidence="1">IPMI</shortName>
    </alternativeName>
    <alternativeName>
        <fullName evidence="1">Isopropylmalate isomerase</fullName>
    </alternativeName>
</protein>
<keyword id="KW-0004">4Fe-4S</keyword>
<keyword id="KW-0028">Amino-acid biosynthesis</keyword>
<keyword id="KW-0100">Branched-chain amino acid biosynthesis</keyword>
<keyword id="KW-0408">Iron</keyword>
<keyword id="KW-0411">Iron-sulfur</keyword>
<keyword id="KW-0432">Leucine biosynthesis</keyword>
<keyword id="KW-0456">Lyase</keyword>
<keyword id="KW-0479">Metal-binding</keyword>
<keyword id="KW-1185">Reference proteome</keyword>
<sequence>MTSPMTSKDSKLTLAEKVWRDHVVSQGEGDQPDLIFIDLQLLHEVTSPQAFDGLRMAGRTLRHPELHLATEDHNVPTEGIHNGSLLEINDLVSRTQVETLRKNCEEFGVRLHAMGDKKQGIVHQVGPQLGATQPGMTIVCGDSHTSTHGAFGAMAFGIGTSEVEHVMATQTLSLKPFKTMAINVTGELQPGVTAKDLILAVIATIGTGGGQGHVIEYRGEAIEKLSMEARMTVCNMSIEAGARAGMIAPDETTFDYIKGREMAPTGQDWDDAVAYWKTLPTDEGAEFDTEITIDGSAITPFITWGTNPGQGLPLSSVVPSPEDFPGDNEKVAAEKALAYMGLTPGTPLRDIAIDTVFLGSCTNARMDDLRIAADILRGRSIADSVRMMVVPSSTMIKEQAEAEGLDKIFIEAGAQWRTAGCSMCLGMNPDQLTPGERCASTSNRNFEGRQGPGGRTHLVSPAVAAATAIKGTLASPADLD</sequence>
<name>LEUC_CORDI</name>
<comment type="function">
    <text evidence="1">Catalyzes the isomerization between 2-isopropylmalate and 3-isopropylmalate, via the formation of 2-isopropylmaleate.</text>
</comment>
<comment type="catalytic activity">
    <reaction evidence="1">
        <text>(2R,3S)-3-isopropylmalate = (2S)-2-isopropylmalate</text>
        <dbReference type="Rhea" id="RHEA:32287"/>
        <dbReference type="ChEBI" id="CHEBI:1178"/>
        <dbReference type="ChEBI" id="CHEBI:35121"/>
        <dbReference type="EC" id="4.2.1.33"/>
    </reaction>
</comment>
<comment type="cofactor">
    <cofactor evidence="1">
        <name>[4Fe-4S] cluster</name>
        <dbReference type="ChEBI" id="CHEBI:49883"/>
    </cofactor>
    <text evidence="1">Binds 1 [4Fe-4S] cluster per subunit.</text>
</comment>
<comment type="pathway">
    <text evidence="1">Amino-acid biosynthesis; L-leucine biosynthesis; L-leucine from 3-methyl-2-oxobutanoate: step 2/4.</text>
</comment>
<comment type="subunit">
    <text evidence="1">Heterodimer of LeuC and LeuD.</text>
</comment>
<comment type="similarity">
    <text evidence="1">Belongs to the aconitase/IPM isomerase family. LeuC type 1 subfamily.</text>
</comment>
<dbReference type="EC" id="4.2.1.33" evidence="1"/>
<dbReference type="EMBL" id="BX248357">
    <property type="protein sequence ID" value="CAE49647.1"/>
    <property type="molecule type" value="Genomic_DNA"/>
</dbReference>
<dbReference type="RefSeq" id="WP_003851230.1">
    <property type="nucleotide sequence ID" value="NC_002935.2"/>
</dbReference>
<dbReference type="SMR" id="Q6NHL0"/>
<dbReference type="STRING" id="257309.DIP1127"/>
<dbReference type="GeneID" id="29422595"/>
<dbReference type="KEGG" id="cdi:DIP1127"/>
<dbReference type="HOGENOM" id="CLU_006714_3_4_11"/>
<dbReference type="UniPathway" id="UPA00048">
    <property type="reaction ID" value="UER00071"/>
</dbReference>
<dbReference type="Proteomes" id="UP000002198">
    <property type="component" value="Chromosome"/>
</dbReference>
<dbReference type="GO" id="GO:0003861">
    <property type="term" value="F:3-isopropylmalate dehydratase activity"/>
    <property type="evidence" value="ECO:0007669"/>
    <property type="project" value="UniProtKB-UniRule"/>
</dbReference>
<dbReference type="GO" id="GO:0051539">
    <property type="term" value="F:4 iron, 4 sulfur cluster binding"/>
    <property type="evidence" value="ECO:0007669"/>
    <property type="project" value="UniProtKB-KW"/>
</dbReference>
<dbReference type="GO" id="GO:0046872">
    <property type="term" value="F:metal ion binding"/>
    <property type="evidence" value="ECO:0007669"/>
    <property type="project" value="UniProtKB-KW"/>
</dbReference>
<dbReference type="GO" id="GO:0009098">
    <property type="term" value="P:L-leucine biosynthetic process"/>
    <property type="evidence" value="ECO:0007669"/>
    <property type="project" value="UniProtKB-UniRule"/>
</dbReference>
<dbReference type="CDD" id="cd01583">
    <property type="entry name" value="IPMI"/>
    <property type="match status" value="1"/>
</dbReference>
<dbReference type="FunFam" id="3.30.499.10:FF:000007">
    <property type="entry name" value="3-isopropylmalate dehydratase large subunit"/>
    <property type="match status" value="1"/>
</dbReference>
<dbReference type="Gene3D" id="3.30.499.10">
    <property type="entry name" value="Aconitase, domain 3"/>
    <property type="match status" value="2"/>
</dbReference>
<dbReference type="HAMAP" id="MF_01026">
    <property type="entry name" value="LeuC_type1"/>
    <property type="match status" value="1"/>
</dbReference>
<dbReference type="InterPro" id="IPR004430">
    <property type="entry name" value="3-IsopropMal_deHydase_lsu"/>
</dbReference>
<dbReference type="InterPro" id="IPR015931">
    <property type="entry name" value="Acnase/IPM_dHydase_lsu_aba_1/3"/>
</dbReference>
<dbReference type="InterPro" id="IPR001030">
    <property type="entry name" value="Acoase/IPM_deHydtase_lsu_aba"/>
</dbReference>
<dbReference type="InterPro" id="IPR018136">
    <property type="entry name" value="Aconitase_4Fe-4S_BS"/>
</dbReference>
<dbReference type="InterPro" id="IPR036008">
    <property type="entry name" value="Aconitase_4Fe-4S_dom"/>
</dbReference>
<dbReference type="InterPro" id="IPR050067">
    <property type="entry name" value="IPM_dehydratase_rel_enz"/>
</dbReference>
<dbReference type="InterPro" id="IPR033941">
    <property type="entry name" value="IPMI_cat"/>
</dbReference>
<dbReference type="NCBIfam" id="TIGR00170">
    <property type="entry name" value="leuC"/>
    <property type="match status" value="1"/>
</dbReference>
<dbReference type="NCBIfam" id="NF004016">
    <property type="entry name" value="PRK05478.1"/>
    <property type="match status" value="1"/>
</dbReference>
<dbReference type="NCBIfam" id="NF009116">
    <property type="entry name" value="PRK12466.1"/>
    <property type="match status" value="1"/>
</dbReference>
<dbReference type="PANTHER" id="PTHR43822:SF9">
    <property type="entry name" value="3-ISOPROPYLMALATE DEHYDRATASE"/>
    <property type="match status" value="1"/>
</dbReference>
<dbReference type="PANTHER" id="PTHR43822">
    <property type="entry name" value="HOMOACONITASE, MITOCHONDRIAL-RELATED"/>
    <property type="match status" value="1"/>
</dbReference>
<dbReference type="Pfam" id="PF00330">
    <property type="entry name" value="Aconitase"/>
    <property type="match status" value="1"/>
</dbReference>
<dbReference type="PRINTS" id="PR00415">
    <property type="entry name" value="ACONITASE"/>
</dbReference>
<dbReference type="SUPFAM" id="SSF53732">
    <property type="entry name" value="Aconitase iron-sulfur domain"/>
    <property type="match status" value="1"/>
</dbReference>
<dbReference type="PROSITE" id="PS00450">
    <property type="entry name" value="ACONITASE_1"/>
    <property type="match status" value="1"/>
</dbReference>
<dbReference type="PROSITE" id="PS01244">
    <property type="entry name" value="ACONITASE_2"/>
    <property type="match status" value="1"/>
</dbReference>
<organism>
    <name type="scientific">Corynebacterium diphtheriae (strain ATCC 700971 / NCTC 13129 / Biotype gravis)</name>
    <dbReference type="NCBI Taxonomy" id="257309"/>
    <lineage>
        <taxon>Bacteria</taxon>
        <taxon>Bacillati</taxon>
        <taxon>Actinomycetota</taxon>
        <taxon>Actinomycetes</taxon>
        <taxon>Mycobacteriales</taxon>
        <taxon>Corynebacteriaceae</taxon>
        <taxon>Corynebacterium</taxon>
    </lineage>
</organism>
<proteinExistence type="inferred from homology"/>
<feature type="chain" id="PRO_0000076739" description="3-isopropylmalate dehydratase large subunit">
    <location>
        <begin position="1"/>
        <end position="480"/>
    </location>
</feature>
<feature type="binding site" evidence="1">
    <location>
        <position position="361"/>
    </location>
    <ligand>
        <name>[4Fe-4S] cluster</name>
        <dbReference type="ChEBI" id="CHEBI:49883"/>
    </ligand>
</feature>
<feature type="binding site" evidence="1">
    <location>
        <position position="421"/>
    </location>
    <ligand>
        <name>[4Fe-4S] cluster</name>
        <dbReference type="ChEBI" id="CHEBI:49883"/>
    </ligand>
</feature>
<feature type="binding site" evidence="1">
    <location>
        <position position="424"/>
    </location>
    <ligand>
        <name>[4Fe-4S] cluster</name>
        <dbReference type="ChEBI" id="CHEBI:49883"/>
    </ligand>
</feature>
<accession>Q6NHL0</accession>
<reference key="1">
    <citation type="journal article" date="2003" name="Nucleic Acids Res.">
        <title>The complete genome sequence and analysis of Corynebacterium diphtheriae NCTC13129.</title>
        <authorList>
            <person name="Cerdeno-Tarraga A.-M."/>
            <person name="Efstratiou A."/>
            <person name="Dover L.G."/>
            <person name="Holden M.T.G."/>
            <person name="Pallen M.J."/>
            <person name="Bentley S.D."/>
            <person name="Besra G.S."/>
            <person name="Churcher C.M."/>
            <person name="James K.D."/>
            <person name="De Zoysa A."/>
            <person name="Chillingworth T."/>
            <person name="Cronin A."/>
            <person name="Dowd L."/>
            <person name="Feltwell T."/>
            <person name="Hamlin N."/>
            <person name="Holroyd S."/>
            <person name="Jagels K."/>
            <person name="Moule S."/>
            <person name="Quail M.A."/>
            <person name="Rabbinowitsch E."/>
            <person name="Rutherford K.M."/>
            <person name="Thomson N.R."/>
            <person name="Unwin L."/>
            <person name="Whitehead S."/>
            <person name="Barrell B.G."/>
            <person name="Parkhill J."/>
        </authorList>
    </citation>
    <scope>NUCLEOTIDE SEQUENCE [LARGE SCALE GENOMIC DNA]</scope>
    <source>
        <strain>ATCC 700971 / NCTC 13129 / Biotype gravis</strain>
    </source>
</reference>
<evidence type="ECO:0000255" key="1">
    <source>
        <dbReference type="HAMAP-Rule" id="MF_01026"/>
    </source>
</evidence>